<feature type="chain" id="PRO_0000177907" description="D-alanine--D-alanine ligase">
    <location>
        <begin position="1"/>
        <end position="318"/>
    </location>
</feature>
<feature type="domain" description="ATP-grasp" evidence="2">
    <location>
        <begin position="117"/>
        <end position="315"/>
    </location>
</feature>
<feature type="binding site" evidence="2">
    <location>
        <begin position="146"/>
        <end position="201"/>
    </location>
    <ligand>
        <name>ATP</name>
        <dbReference type="ChEBI" id="CHEBI:30616"/>
    </ligand>
</feature>
<feature type="binding site" evidence="2">
    <location>
        <position position="268"/>
    </location>
    <ligand>
        <name>Mg(2+)</name>
        <dbReference type="ChEBI" id="CHEBI:18420"/>
        <label>1</label>
    </ligand>
</feature>
<feature type="binding site" evidence="2">
    <location>
        <position position="282"/>
    </location>
    <ligand>
        <name>Mg(2+)</name>
        <dbReference type="ChEBI" id="CHEBI:18420"/>
        <label>1</label>
    </ligand>
</feature>
<feature type="binding site" evidence="2">
    <location>
        <position position="282"/>
    </location>
    <ligand>
        <name>Mg(2+)</name>
        <dbReference type="ChEBI" id="CHEBI:18420"/>
        <label>2</label>
    </ligand>
</feature>
<feature type="binding site" evidence="2">
    <location>
        <position position="284"/>
    </location>
    <ligand>
        <name>Mg(2+)</name>
        <dbReference type="ChEBI" id="CHEBI:18420"/>
        <label>2</label>
    </ligand>
</feature>
<organism>
    <name type="scientific">Xanthomonas axonopodis pv. citri (strain 306)</name>
    <dbReference type="NCBI Taxonomy" id="190486"/>
    <lineage>
        <taxon>Bacteria</taxon>
        <taxon>Pseudomonadati</taxon>
        <taxon>Pseudomonadota</taxon>
        <taxon>Gammaproteobacteria</taxon>
        <taxon>Lysobacterales</taxon>
        <taxon>Lysobacteraceae</taxon>
        <taxon>Xanthomonas</taxon>
    </lineage>
</organism>
<dbReference type="EC" id="6.3.2.4" evidence="2"/>
<dbReference type="EMBL" id="AE008923">
    <property type="protein sequence ID" value="AAM35669.1"/>
    <property type="molecule type" value="Genomic_DNA"/>
</dbReference>
<dbReference type="RefSeq" id="WP_003485275.1">
    <property type="nucleotide sequence ID" value="NC_003919.1"/>
</dbReference>
<dbReference type="SMR" id="Q8PPA6"/>
<dbReference type="KEGG" id="xac:XAC0781"/>
<dbReference type="eggNOG" id="COG1181">
    <property type="taxonomic scope" value="Bacteria"/>
</dbReference>
<dbReference type="HOGENOM" id="CLU_039268_1_2_6"/>
<dbReference type="UniPathway" id="UPA00219"/>
<dbReference type="Proteomes" id="UP000000576">
    <property type="component" value="Chromosome"/>
</dbReference>
<dbReference type="GO" id="GO:0005829">
    <property type="term" value="C:cytosol"/>
    <property type="evidence" value="ECO:0007669"/>
    <property type="project" value="TreeGrafter"/>
</dbReference>
<dbReference type="GO" id="GO:0005524">
    <property type="term" value="F:ATP binding"/>
    <property type="evidence" value="ECO:0007669"/>
    <property type="project" value="UniProtKB-KW"/>
</dbReference>
<dbReference type="GO" id="GO:0008716">
    <property type="term" value="F:D-alanine-D-alanine ligase activity"/>
    <property type="evidence" value="ECO:0007669"/>
    <property type="project" value="UniProtKB-UniRule"/>
</dbReference>
<dbReference type="GO" id="GO:0046872">
    <property type="term" value="F:metal ion binding"/>
    <property type="evidence" value="ECO:0007669"/>
    <property type="project" value="UniProtKB-KW"/>
</dbReference>
<dbReference type="GO" id="GO:0071555">
    <property type="term" value="P:cell wall organization"/>
    <property type="evidence" value="ECO:0007669"/>
    <property type="project" value="UniProtKB-KW"/>
</dbReference>
<dbReference type="GO" id="GO:0009252">
    <property type="term" value="P:peptidoglycan biosynthetic process"/>
    <property type="evidence" value="ECO:0007669"/>
    <property type="project" value="UniProtKB-UniRule"/>
</dbReference>
<dbReference type="GO" id="GO:0008360">
    <property type="term" value="P:regulation of cell shape"/>
    <property type="evidence" value="ECO:0007669"/>
    <property type="project" value="UniProtKB-KW"/>
</dbReference>
<dbReference type="FunFam" id="3.30.1490.20:FF:000007">
    <property type="entry name" value="D-alanine--D-alanine ligase"/>
    <property type="match status" value="1"/>
</dbReference>
<dbReference type="FunFam" id="3.30.470.20:FF:000008">
    <property type="entry name" value="D-alanine--D-alanine ligase"/>
    <property type="match status" value="1"/>
</dbReference>
<dbReference type="FunFam" id="3.40.50.20:FF:000013">
    <property type="entry name" value="D-alanine--D-alanine ligase"/>
    <property type="match status" value="1"/>
</dbReference>
<dbReference type="Gene3D" id="3.40.50.20">
    <property type="match status" value="1"/>
</dbReference>
<dbReference type="Gene3D" id="3.30.1490.20">
    <property type="entry name" value="ATP-grasp fold, A domain"/>
    <property type="match status" value="1"/>
</dbReference>
<dbReference type="Gene3D" id="3.30.470.20">
    <property type="entry name" value="ATP-grasp fold, B domain"/>
    <property type="match status" value="1"/>
</dbReference>
<dbReference type="HAMAP" id="MF_00047">
    <property type="entry name" value="Dala_Dala_lig"/>
    <property type="match status" value="1"/>
</dbReference>
<dbReference type="InterPro" id="IPR011761">
    <property type="entry name" value="ATP-grasp"/>
</dbReference>
<dbReference type="InterPro" id="IPR013815">
    <property type="entry name" value="ATP_grasp_subdomain_1"/>
</dbReference>
<dbReference type="InterPro" id="IPR000291">
    <property type="entry name" value="D-Ala_lig_Van_CS"/>
</dbReference>
<dbReference type="InterPro" id="IPR005905">
    <property type="entry name" value="D_ala_D_ala"/>
</dbReference>
<dbReference type="InterPro" id="IPR011095">
    <property type="entry name" value="Dala_Dala_lig_C"/>
</dbReference>
<dbReference type="InterPro" id="IPR011127">
    <property type="entry name" value="Dala_Dala_lig_N"/>
</dbReference>
<dbReference type="InterPro" id="IPR016185">
    <property type="entry name" value="PreATP-grasp_dom_sf"/>
</dbReference>
<dbReference type="NCBIfam" id="TIGR01205">
    <property type="entry name" value="D_ala_D_alaTIGR"/>
    <property type="match status" value="1"/>
</dbReference>
<dbReference type="NCBIfam" id="NF002378">
    <property type="entry name" value="PRK01372.1"/>
    <property type="match status" value="1"/>
</dbReference>
<dbReference type="PANTHER" id="PTHR23132">
    <property type="entry name" value="D-ALANINE--D-ALANINE LIGASE"/>
    <property type="match status" value="1"/>
</dbReference>
<dbReference type="PANTHER" id="PTHR23132:SF23">
    <property type="entry name" value="D-ALANINE--D-ALANINE LIGASE B"/>
    <property type="match status" value="1"/>
</dbReference>
<dbReference type="Pfam" id="PF07478">
    <property type="entry name" value="Dala_Dala_lig_C"/>
    <property type="match status" value="1"/>
</dbReference>
<dbReference type="Pfam" id="PF01820">
    <property type="entry name" value="Dala_Dala_lig_N"/>
    <property type="match status" value="1"/>
</dbReference>
<dbReference type="PIRSF" id="PIRSF039102">
    <property type="entry name" value="Ddl/VanB"/>
    <property type="match status" value="1"/>
</dbReference>
<dbReference type="SUPFAM" id="SSF56059">
    <property type="entry name" value="Glutathione synthetase ATP-binding domain-like"/>
    <property type="match status" value="1"/>
</dbReference>
<dbReference type="SUPFAM" id="SSF52440">
    <property type="entry name" value="PreATP-grasp domain"/>
    <property type="match status" value="1"/>
</dbReference>
<dbReference type="PROSITE" id="PS50975">
    <property type="entry name" value="ATP_GRASP"/>
    <property type="match status" value="1"/>
</dbReference>
<dbReference type="PROSITE" id="PS00843">
    <property type="entry name" value="DALA_DALA_LIGASE_1"/>
    <property type="match status" value="1"/>
</dbReference>
<dbReference type="PROSITE" id="PS00844">
    <property type="entry name" value="DALA_DALA_LIGASE_2"/>
    <property type="match status" value="1"/>
</dbReference>
<name>DDL_XANAC</name>
<reference key="1">
    <citation type="journal article" date="2002" name="Nature">
        <title>Comparison of the genomes of two Xanthomonas pathogens with differing host specificities.</title>
        <authorList>
            <person name="da Silva A.C.R."/>
            <person name="Ferro J.A."/>
            <person name="Reinach F.C."/>
            <person name="Farah C.S."/>
            <person name="Furlan L.R."/>
            <person name="Quaggio R.B."/>
            <person name="Monteiro-Vitorello C.B."/>
            <person name="Van Sluys M.A."/>
            <person name="Almeida N.F. Jr."/>
            <person name="Alves L.M.C."/>
            <person name="do Amaral A.M."/>
            <person name="Bertolini M.C."/>
            <person name="Camargo L.E.A."/>
            <person name="Camarotte G."/>
            <person name="Cannavan F."/>
            <person name="Cardozo J."/>
            <person name="Chambergo F."/>
            <person name="Ciapina L.P."/>
            <person name="Cicarelli R.M.B."/>
            <person name="Coutinho L.L."/>
            <person name="Cursino-Santos J.R."/>
            <person name="El-Dorry H."/>
            <person name="Faria J.B."/>
            <person name="Ferreira A.J.S."/>
            <person name="Ferreira R.C.C."/>
            <person name="Ferro M.I.T."/>
            <person name="Formighieri E.F."/>
            <person name="Franco M.C."/>
            <person name="Greggio C.C."/>
            <person name="Gruber A."/>
            <person name="Katsuyama A.M."/>
            <person name="Kishi L.T."/>
            <person name="Leite R.P."/>
            <person name="Lemos E.G.M."/>
            <person name="Lemos M.V.F."/>
            <person name="Locali E.C."/>
            <person name="Machado M.A."/>
            <person name="Madeira A.M.B.N."/>
            <person name="Martinez-Rossi N.M."/>
            <person name="Martins E.C."/>
            <person name="Meidanis J."/>
            <person name="Menck C.F.M."/>
            <person name="Miyaki C.Y."/>
            <person name="Moon D.H."/>
            <person name="Moreira L.M."/>
            <person name="Novo M.T.M."/>
            <person name="Okura V.K."/>
            <person name="Oliveira M.C."/>
            <person name="Oliveira V.R."/>
            <person name="Pereira H.A."/>
            <person name="Rossi A."/>
            <person name="Sena J.A.D."/>
            <person name="Silva C."/>
            <person name="de Souza R.F."/>
            <person name="Spinola L.A.F."/>
            <person name="Takita M.A."/>
            <person name="Tamura R.E."/>
            <person name="Teixeira E.C."/>
            <person name="Tezza R.I.D."/>
            <person name="Trindade dos Santos M."/>
            <person name="Truffi D."/>
            <person name="Tsai S.M."/>
            <person name="White F.F."/>
            <person name="Setubal J.C."/>
            <person name="Kitajima J.P."/>
        </authorList>
    </citation>
    <scope>NUCLEOTIDE SEQUENCE [LARGE SCALE GENOMIC DNA]</scope>
    <source>
        <strain>306</strain>
    </source>
</reference>
<proteinExistence type="inferred from homology"/>
<comment type="function">
    <text evidence="2">Cell wall formation.</text>
</comment>
<comment type="catalytic activity">
    <reaction evidence="2">
        <text>2 D-alanine + ATP = D-alanyl-D-alanine + ADP + phosphate + H(+)</text>
        <dbReference type="Rhea" id="RHEA:11224"/>
        <dbReference type="ChEBI" id="CHEBI:15378"/>
        <dbReference type="ChEBI" id="CHEBI:30616"/>
        <dbReference type="ChEBI" id="CHEBI:43474"/>
        <dbReference type="ChEBI" id="CHEBI:57416"/>
        <dbReference type="ChEBI" id="CHEBI:57822"/>
        <dbReference type="ChEBI" id="CHEBI:456216"/>
        <dbReference type="EC" id="6.3.2.4"/>
    </reaction>
</comment>
<comment type="cofactor">
    <cofactor evidence="1">
        <name>Mg(2+)</name>
        <dbReference type="ChEBI" id="CHEBI:18420"/>
    </cofactor>
    <cofactor evidence="1">
        <name>Mn(2+)</name>
        <dbReference type="ChEBI" id="CHEBI:29035"/>
    </cofactor>
    <text evidence="1">Binds 2 magnesium or manganese ions per subunit.</text>
</comment>
<comment type="pathway">
    <text evidence="2">Cell wall biogenesis; peptidoglycan biosynthesis.</text>
</comment>
<comment type="subcellular location">
    <subcellularLocation>
        <location evidence="2">Cytoplasm</location>
    </subcellularLocation>
</comment>
<comment type="similarity">
    <text evidence="2">Belongs to the D-alanine--D-alanine ligase family.</text>
</comment>
<keyword id="KW-0067">ATP-binding</keyword>
<keyword id="KW-0133">Cell shape</keyword>
<keyword id="KW-0961">Cell wall biogenesis/degradation</keyword>
<keyword id="KW-0963">Cytoplasm</keyword>
<keyword id="KW-0436">Ligase</keyword>
<keyword id="KW-0460">Magnesium</keyword>
<keyword id="KW-0464">Manganese</keyword>
<keyword id="KW-0479">Metal-binding</keyword>
<keyword id="KW-0547">Nucleotide-binding</keyword>
<keyword id="KW-0573">Peptidoglycan synthesis</keyword>
<accession>Q8PPA6</accession>
<protein>
    <recommendedName>
        <fullName evidence="2">D-alanine--D-alanine ligase</fullName>
        <ecNumber evidence="2">6.3.2.4</ecNumber>
    </recommendedName>
    <alternativeName>
        <fullName evidence="2">D-Ala-D-Ala ligase</fullName>
    </alternativeName>
    <alternativeName>
        <fullName evidence="2">D-alanylalanine synthetase</fullName>
    </alternativeName>
</protein>
<sequence>MSALVGNARTSDPAAFGRVAVLLGGTSSEREVSLNSGGNVLDALRARGVDAQPVDGIPALAKALVAQQFDRVFNVLHGHNGGGEDGIVQGLMEAFGVPYTGSDVLGSALSMDKIRTKQVWLSLGLSTPRYARLAAGASAEDIHAAARQIGLPIIVKPANEGSSVGVSRVFDQAQLEEAVTLAARYDGALLMEQLIEGDELTVAVLGDTALPSIRIVPKGQWYDYNAKYIADDTQYLCPGLEGEAEAQIRQLALDAFRAAGCRGWGRVDVMRDGSSGQLYLLEVNTAPGMTSHSLVPKAARQLGIDFETLVWRVLEQTL</sequence>
<gene>
    <name evidence="2" type="primary">ddl</name>
    <name type="synonym">ddlB</name>
    <name type="ordered locus">XAC0781</name>
</gene>
<evidence type="ECO:0000250" key="1"/>
<evidence type="ECO:0000255" key="2">
    <source>
        <dbReference type="HAMAP-Rule" id="MF_00047"/>
    </source>
</evidence>